<sequence>MKTEIHPNYKAAKISCASCGTVYETRTSIGDINIEICSACHPFFTGKSKLVDTTGRVDKFKKKYKMQ</sequence>
<gene>
    <name evidence="1" type="primary">rpmE</name>
    <name type="ordered locus">LBJ_0727</name>
</gene>
<comment type="function">
    <text evidence="1">Binds the 23S rRNA.</text>
</comment>
<comment type="subunit">
    <text evidence="1">Part of the 50S ribosomal subunit.</text>
</comment>
<comment type="similarity">
    <text evidence="1">Belongs to the bacterial ribosomal protein bL31 family. Type A subfamily.</text>
</comment>
<dbReference type="EMBL" id="CP000350">
    <property type="protein sequence ID" value="ABJ75399.1"/>
    <property type="molecule type" value="Genomic_DNA"/>
</dbReference>
<dbReference type="RefSeq" id="WP_000845534.1">
    <property type="nucleotide sequence ID" value="NC_008510.1"/>
</dbReference>
<dbReference type="SMR" id="Q04UM1"/>
<dbReference type="GeneID" id="61173326"/>
<dbReference type="KEGG" id="lbj:LBJ_0727"/>
<dbReference type="HOGENOM" id="CLU_114306_4_0_12"/>
<dbReference type="Proteomes" id="UP000000656">
    <property type="component" value="Chromosome 1"/>
</dbReference>
<dbReference type="GO" id="GO:1990904">
    <property type="term" value="C:ribonucleoprotein complex"/>
    <property type="evidence" value="ECO:0007669"/>
    <property type="project" value="UniProtKB-KW"/>
</dbReference>
<dbReference type="GO" id="GO:0005840">
    <property type="term" value="C:ribosome"/>
    <property type="evidence" value="ECO:0007669"/>
    <property type="project" value="UniProtKB-KW"/>
</dbReference>
<dbReference type="GO" id="GO:0019843">
    <property type="term" value="F:rRNA binding"/>
    <property type="evidence" value="ECO:0007669"/>
    <property type="project" value="UniProtKB-KW"/>
</dbReference>
<dbReference type="GO" id="GO:0003735">
    <property type="term" value="F:structural constituent of ribosome"/>
    <property type="evidence" value="ECO:0007669"/>
    <property type="project" value="InterPro"/>
</dbReference>
<dbReference type="GO" id="GO:0006412">
    <property type="term" value="P:translation"/>
    <property type="evidence" value="ECO:0007669"/>
    <property type="project" value="UniProtKB-UniRule"/>
</dbReference>
<dbReference type="Gene3D" id="4.10.830.30">
    <property type="entry name" value="Ribosomal protein L31"/>
    <property type="match status" value="1"/>
</dbReference>
<dbReference type="HAMAP" id="MF_00501">
    <property type="entry name" value="Ribosomal_bL31_1"/>
    <property type="match status" value="1"/>
</dbReference>
<dbReference type="InterPro" id="IPR034704">
    <property type="entry name" value="Ribosomal_bL28/bL31-like_sf"/>
</dbReference>
<dbReference type="InterPro" id="IPR002150">
    <property type="entry name" value="Ribosomal_bL31"/>
</dbReference>
<dbReference type="InterPro" id="IPR027491">
    <property type="entry name" value="Ribosomal_bL31_A"/>
</dbReference>
<dbReference type="InterPro" id="IPR042105">
    <property type="entry name" value="Ribosomal_bL31_sf"/>
</dbReference>
<dbReference type="NCBIfam" id="TIGR00105">
    <property type="entry name" value="L31"/>
    <property type="match status" value="1"/>
</dbReference>
<dbReference type="NCBIfam" id="NF000612">
    <property type="entry name" value="PRK00019.1"/>
    <property type="match status" value="1"/>
</dbReference>
<dbReference type="PANTHER" id="PTHR33280">
    <property type="entry name" value="50S RIBOSOMAL PROTEIN L31, CHLOROPLASTIC"/>
    <property type="match status" value="1"/>
</dbReference>
<dbReference type="PANTHER" id="PTHR33280:SF1">
    <property type="entry name" value="LARGE RIBOSOMAL SUBUNIT PROTEIN BL31C"/>
    <property type="match status" value="1"/>
</dbReference>
<dbReference type="Pfam" id="PF01197">
    <property type="entry name" value="Ribosomal_L31"/>
    <property type="match status" value="1"/>
</dbReference>
<dbReference type="PRINTS" id="PR01249">
    <property type="entry name" value="RIBOSOMALL31"/>
</dbReference>
<dbReference type="SUPFAM" id="SSF143800">
    <property type="entry name" value="L28p-like"/>
    <property type="match status" value="1"/>
</dbReference>
<dbReference type="PROSITE" id="PS01143">
    <property type="entry name" value="RIBOSOMAL_L31"/>
    <property type="match status" value="1"/>
</dbReference>
<protein>
    <recommendedName>
        <fullName evidence="1">Large ribosomal subunit protein bL31</fullName>
    </recommendedName>
    <alternativeName>
        <fullName evidence="2">50S ribosomal protein L31</fullName>
    </alternativeName>
</protein>
<name>RL31_LEPBJ</name>
<evidence type="ECO:0000255" key="1">
    <source>
        <dbReference type="HAMAP-Rule" id="MF_00501"/>
    </source>
</evidence>
<evidence type="ECO:0000305" key="2"/>
<proteinExistence type="inferred from homology"/>
<reference key="1">
    <citation type="journal article" date="2006" name="Proc. Natl. Acad. Sci. U.S.A.">
        <title>Genome reduction in Leptospira borgpetersenii reflects limited transmission potential.</title>
        <authorList>
            <person name="Bulach D.M."/>
            <person name="Zuerner R.L."/>
            <person name="Wilson P."/>
            <person name="Seemann T."/>
            <person name="McGrath A."/>
            <person name="Cullen P.A."/>
            <person name="Davis J."/>
            <person name="Johnson M."/>
            <person name="Kuczek E."/>
            <person name="Alt D.P."/>
            <person name="Peterson-Burch B."/>
            <person name="Coppel R.L."/>
            <person name="Rood J.I."/>
            <person name="Davies J.K."/>
            <person name="Adler B."/>
        </authorList>
    </citation>
    <scope>NUCLEOTIDE SEQUENCE [LARGE SCALE GENOMIC DNA]</scope>
    <source>
        <strain>JB197</strain>
    </source>
</reference>
<organism>
    <name type="scientific">Leptospira borgpetersenii serovar Hardjo-bovis (strain JB197)</name>
    <dbReference type="NCBI Taxonomy" id="355277"/>
    <lineage>
        <taxon>Bacteria</taxon>
        <taxon>Pseudomonadati</taxon>
        <taxon>Spirochaetota</taxon>
        <taxon>Spirochaetia</taxon>
        <taxon>Leptospirales</taxon>
        <taxon>Leptospiraceae</taxon>
        <taxon>Leptospira</taxon>
    </lineage>
</organism>
<keyword id="KW-0687">Ribonucleoprotein</keyword>
<keyword id="KW-0689">Ribosomal protein</keyword>
<keyword id="KW-0694">RNA-binding</keyword>
<keyword id="KW-0699">rRNA-binding</keyword>
<accession>Q04UM1</accession>
<feature type="chain" id="PRO_1000126651" description="Large ribosomal subunit protein bL31">
    <location>
        <begin position="1"/>
        <end position="67"/>
    </location>
</feature>